<reference key="1">
    <citation type="journal article" date="2007" name="PLoS ONE">
        <title>A glimpse of streptococcal toxic shock syndrome from comparative genomics of S. suis 2 Chinese isolates.</title>
        <authorList>
            <person name="Chen C."/>
            <person name="Tang J."/>
            <person name="Dong W."/>
            <person name="Wang C."/>
            <person name="Feng Y."/>
            <person name="Wang J."/>
            <person name="Zheng F."/>
            <person name="Pan X."/>
            <person name="Liu D."/>
            <person name="Li M."/>
            <person name="Song Y."/>
            <person name="Zhu X."/>
            <person name="Sun H."/>
            <person name="Feng T."/>
            <person name="Guo Z."/>
            <person name="Ju A."/>
            <person name="Ge J."/>
            <person name="Dong Y."/>
            <person name="Sun W."/>
            <person name="Jiang Y."/>
            <person name="Wang J."/>
            <person name="Yan J."/>
            <person name="Yang H."/>
            <person name="Wang X."/>
            <person name="Gao G.F."/>
            <person name="Yang R."/>
            <person name="Wang J."/>
            <person name="Yu J."/>
        </authorList>
    </citation>
    <scope>NUCLEOTIDE SEQUENCE [LARGE SCALE GENOMIC DNA]</scope>
    <source>
        <strain>98HAH33</strain>
    </source>
</reference>
<evidence type="ECO:0000255" key="1">
    <source>
        <dbReference type="HAMAP-Rule" id="MF_01554"/>
    </source>
</evidence>
<evidence type="ECO:0000305" key="2"/>
<comment type="function">
    <text evidence="1">Catalyzes the conversion of glucosamine-6-phosphate to glucosamine-1-phosphate.</text>
</comment>
<comment type="catalytic activity">
    <reaction evidence="1">
        <text>alpha-D-glucosamine 1-phosphate = D-glucosamine 6-phosphate</text>
        <dbReference type="Rhea" id="RHEA:23424"/>
        <dbReference type="ChEBI" id="CHEBI:58516"/>
        <dbReference type="ChEBI" id="CHEBI:58725"/>
        <dbReference type="EC" id="5.4.2.10"/>
    </reaction>
</comment>
<comment type="cofactor">
    <cofactor evidence="1">
        <name>Mg(2+)</name>
        <dbReference type="ChEBI" id="CHEBI:18420"/>
    </cofactor>
    <text evidence="1">Binds 1 Mg(2+) ion per subunit.</text>
</comment>
<comment type="PTM">
    <text evidence="1">Activated by phosphorylation.</text>
</comment>
<comment type="similarity">
    <text evidence="1">Belongs to the phosphohexose mutase family.</text>
</comment>
<comment type="sequence caution" evidence="2">
    <conflict type="erroneous initiation">
        <sequence resource="EMBL-CDS" id="ABP92639"/>
    </conflict>
</comment>
<protein>
    <recommendedName>
        <fullName evidence="1">Phosphoglucosamine mutase</fullName>
        <ecNumber evidence="1">5.4.2.10</ecNumber>
    </recommendedName>
</protein>
<gene>
    <name evidence="1" type="primary">glmM</name>
    <name type="ordered locus">SSU98_1481</name>
</gene>
<name>GLMM_STRS2</name>
<organism>
    <name type="scientific">Streptococcus suis (strain 98HAH33)</name>
    <dbReference type="NCBI Taxonomy" id="391296"/>
    <lineage>
        <taxon>Bacteria</taxon>
        <taxon>Bacillati</taxon>
        <taxon>Bacillota</taxon>
        <taxon>Bacilli</taxon>
        <taxon>Lactobacillales</taxon>
        <taxon>Streptococcaceae</taxon>
        <taxon>Streptococcus</taxon>
    </lineage>
</organism>
<proteinExistence type="inferred from homology"/>
<accession>A4W2Q0</accession>
<sequence length="449" mass="48105">MGKYFGTDGVRGEANVELTPELAFKLGRFGGYVLSQHETDVPRVFVARDTRISGQMLEAALIAGLLSVGIHVYKLGVLATPGVAHLVKTEKASAGVMISASHNPAQDNGIKFFAGDGFKLDDALEAEIEALLDAEEDTLPRPSAQGLGDVVEYPEGLRKYQQFLVSTGTDLDGMKVALDTANGAAATSARQIFVDLGADLTVMAEKPDGLNINEGVGSTHPEKLQELVKETGSQIGLAFDGDSDRLIAVDENGVLVDGDRIMYIVGKYLADRGLLAKNTIVTTVMSNLGFHKALDREGIEKAVTAVGDRYVVEEMRKEGYNVGGEQSGHVILMDYNTTGDGQLTAVQLTKIMKETGKKLSELAAEVTIYPQKLVNIRVENSMKDKAMEVPAIAAIIEKMEAEMAGNGRILVRPSGTEPLLRVMAEAPTDAEVDYYVDTIADVVRAEIGS</sequence>
<dbReference type="EC" id="5.4.2.10" evidence="1"/>
<dbReference type="EMBL" id="CP000408">
    <property type="protein sequence ID" value="ABP92639.1"/>
    <property type="status" value="ALT_INIT"/>
    <property type="molecule type" value="Genomic_DNA"/>
</dbReference>
<dbReference type="SMR" id="A4W2Q0"/>
<dbReference type="KEGG" id="ssv:SSU98_1481"/>
<dbReference type="HOGENOM" id="CLU_016950_7_0_9"/>
<dbReference type="GO" id="GO:0005829">
    <property type="term" value="C:cytosol"/>
    <property type="evidence" value="ECO:0007669"/>
    <property type="project" value="TreeGrafter"/>
</dbReference>
<dbReference type="GO" id="GO:0000287">
    <property type="term" value="F:magnesium ion binding"/>
    <property type="evidence" value="ECO:0007669"/>
    <property type="project" value="UniProtKB-UniRule"/>
</dbReference>
<dbReference type="GO" id="GO:0008966">
    <property type="term" value="F:phosphoglucosamine mutase activity"/>
    <property type="evidence" value="ECO:0007669"/>
    <property type="project" value="UniProtKB-UniRule"/>
</dbReference>
<dbReference type="GO" id="GO:0004615">
    <property type="term" value="F:phosphomannomutase activity"/>
    <property type="evidence" value="ECO:0007669"/>
    <property type="project" value="TreeGrafter"/>
</dbReference>
<dbReference type="GO" id="GO:0005975">
    <property type="term" value="P:carbohydrate metabolic process"/>
    <property type="evidence" value="ECO:0007669"/>
    <property type="project" value="InterPro"/>
</dbReference>
<dbReference type="GO" id="GO:0009252">
    <property type="term" value="P:peptidoglycan biosynthetic process"/>
    <property type="evidence" value="ECO:0007669"/>
    <property type="project" value="TreeGrafter"/>
</dbReference>
<dbReference type="GO" id="GO:0006048">
    <property type="term" value="P:UDP-N-acetylglucosamine biosynthetic process"/>
    <property type="evidence" value="ECO:0007669"/>
    <property type="project" value="TreeGrafter"/>
</dbReference>
<dbReference type="CDD" id="cd05802">
    <property type="entry name" value="GlmM"/>
    <property type="match status" value="1"/>
</dbReference>
<dbReference type="FunFam" id="3.30.310.50:FF:000001">
    <property type="entry name" value="Phosphoglucosamine mutase"/>
    <property type="match status" value="1"/>
</dbReference>
<dbReference type="FunFam" id="3.40.120.10:FF:000001">
    <property type="entry name" value="Phosphoglucosamine mutase"/>
    <property type="match status" value="1"/>
</dbReference>
<dbReference type="FunFam" id="3.40.120.10:FF:000002">
    <property type="entry name" value="Phosphoglucosamine mutase"/>
    <property type="match status" value="1"/>
</dbReference>
<dbReference type="Gene3D" id="3.40.120.10">
    <property type="entry name" value="Alpha-D-Glucose-1,6-Bisphosphate, subunit A, domain 3"/>
    <property type="match status" value="3"/>
</dbReference>
<dbReference type="Gene3D" id="3.30.310.50">
    <property type="entry name" value="Alpha-D-phosphohexomutase, C-terminal domain"/>
    <property type="match status" value="1"/>
</dbReference>
<dbReference type="HAMAP" id="MF_01554_B">
    <property type="entry name" value="GlmM_B"/>
    <property type="match status" value="1"/>
</dbReference>
<dbReference type="InterPro" id="IPR005844">
    <property type="entry name" value="A-D-PHexomutase_a/b/a-I"/>
</dbReference>
<dbReference type="InterPro" id="IPR016055">
    <property type="entry name" value="A-D-PHexomutase_a/b/a-I/II/III"/>
</dbReference>
<dbReference type="InterPro" id="IPR005845">
    <property type="entry name" value="A-D-PHexomutase_a/b/a-II"/>
</dbReference>
<dbReference type="InterPro" id="IPR005846">
    <property type="entry name" value="A-D-PHexomutase_a/b/a-III"/>
</dbReference>
<dbReference type="InterPro" id="IPR005843">
    <property type="entry name" value="A-D-PHexomutase_C"/>
</dbReference>
<dbReference type="InterPro" id="IPR036900">
    <property type="entry name" value="A-D-PHexomutase_C_sf"/>
</dbReference>
<dbReference type="InterPro" id="IPR016066">
    <property type="entry name" value="A-D-PHexomutase_CS"/>
</dbReference>
<dbReference type="InterPro" id="IPR005841">
    <property type="entry name" value="Alpha-D-phosphohexomutase_SF"/>
</dbReference>
<dbReference type="InterPro" id="IPR006352">
    <property type="entry name" value="GlmM_bact"/>
</dbReference>
<dbReference type="InterPro" id="IPR050060">
    <property type="entry name" value="Phosphoglucosamine_mutase"/>
</dbReference>
<dbReference type="NCBIfam" id="TIGR01455">
    <property type="entry name" value="glmM"/>
    <property type="match status" value="1"/>
</dbReference>
<dbReference type="PANTHER" id="PTHR42946:SF1">
    <property type="entry name" value="PHOSPHOGLUCOMUTASE (ALPHA-D-GLUCOSE-1,6-BISPHOSPHATE-DEPENDENT)"/>
    <property type="match status" value="1"/>
</dbReference>
<dbReference type="PANTHER" id="PTHR42946">
    <property type="entry name" value="PHOSPHOHEXOSE MUTASE"/>
    <property type="match status" value="1"/>
</dbReference>
<dbReference type="Pfam" id="PF02878">
    <property type="entry name" value="PGM_PMM_I"/>
    <property type="match status" value="1"/>
</dbReference>
<dbReference type="Pfam" id="PF02879">
    <property type="entry name" value="PGM_PMM_II"/>
    <property type="match status" value="1"/>
</dbReference>
<dbReference type="Pfam" id="PF02880">
    <property type="entry name" value="PGM_PMM_III"/>
    <property type="match status" value="1"/>
</dbReference>
<dbReference type="Pfam" id="PF00408">
    <property type="entry name" value="PGM_PMM_IV"/>
    <property type="match status" value="1"/>
</dbReference>
<dbReference type="PRINTS" id="PR00509">
    <property type="entry name" value="PGMPMM"/>
</dbReference>
<dbReference type="SUPFAM" id="SSF55957">
    <property type="entry name" value="Phosphoglucomutase, C-terminal domain"/>
    <property type="match status" value="1"/>
</dbReference>
<dbReference type="SUPFAM" id="SSF53738">
    <property type="entry name" value="Phosphoglucomutase, first 3 domains"/>
    <property type="match status" value="3"/>
</dbReference>
<dbReference type="PROSITE" id="PS00710">
    <property type="entry name" value="PGM_PMM"/>
    <property type="match status" value="1"/>
</dbReference>
<keyword id="KW-0413">Isomerase</keyword>
<keyword id="KW-0460">Magnesium</keyword>
<keyword id="KW-0479">Metal-binding</keyword>
<keyword id="KW-0597">Phosphoprotein</keyword>
<feature type="chain" id="PRO_0000305682" description="Phosphoglucosamine mutase">
    <location>
        <begin position="1"/>
        <end position="449"/>
    </location>
</feature>
<feature type="active site" description="Phosphoserine intermediate" evidence="1">
    <location>
        <position position="101"/>
    </location>
</feature>
<feature type="binding site" description="via phosphate group" evidence="1">
    <location>
        <position position="101"/>
    </location>
    <ligand>
        <name>Mg(2+)</name>
        <dbReference type="ChEBI" id="CHEBI:18420"/>
    </ligand>
</feature>
<feature type="binding site" evidence="1">
    <location>
        <position position="240"/>
    </location>
    <ligand>
        <name>Mg(2+)</name>
        <dbReference type="ChEBI" id="CHEBI:18420"/>
    </ligand>
</feature>
<feature type="binding site" evidence="1">
    <location>
        <position position="242"/>
    </location>
    <ligand>
        <name>Mg(2+)</name>
        <dbReference type="ChEBI" id="CHEBI:18420"/>
    </ligand>
</feature>
<feature type="binding site" evidence="1">
    <location>
        <position position="244"/>
    </location>
    <ligand>
        <name>Mg(2+)</name>
        <dbReference type="ChEBI" id="CHEBI:18420"/>
    </ligand>
</feature>
<feature type="modified residue" description="Phosphoserine" evidence="1">
    <location>
        <position position="101"/>
    </location>
</feature>